<protein>
    <recommendedName>
        <fullName>Cerebellin-1</fullName>
    </recommendedName>
    <alternativeName>
        <fullName>Precerebellin</fullName>
    </alternativeName>
    <component>
        <recommendedName>
            <fullName>Cerebellin</fullName>
            <shortName>CER</shortName>
        </recommendedName>
    </component>
    <component>
        <recommendedName>
            <fullName>[des-Ser1]-cerebellin</fullName>
        </recommendedName>
    </component>
</protein>
<sequence>MLGVLELLLLGAAWLAGPARGQNETEPIVLEGKCLVVCDSNPTSDPTGTALGISVRSGSAKVAFSAIRSTNHEPSEMSNRTMIIYFDQVLVNIGNNFDSERSTFIAPRKGIYSFNFHVVKVYNRQTIQVSLMLNGWPVISAFAGDQDVTREAASNGVLIQMEKGDRAYLKLERGNLMGGWKYSTFSGFLVFPL</sequence>
<proteinExistence type="evidence at protein level"/>
<evidence type="ECO:0000250" key="1">
    <source>
        <dbReference type="UniProtKB" id="P63182"/>
    </source>
</evidence>
<evidence type="ECO:0000250" key="2">
    <source>
        <dbReference type="UniProtKB" id="Q9R171"/>
    </source>
</evidence>
<evidence type="ECO:0000255" key="3"/>
<evidence type="ECO:0000255" key="4">
    <source>
        <dbReference type="PROSITE-ProRule" id="PRU00368"/>
    </source>
</evidence>
<evidence type="ECO:0000269" key="5">
    <source>
    </source>
</evidence>
<evidence type="ECO:0007744" key="6">
    <source>
        <dbReference type="PDB" id="5KC5"/>
    </source>
</evidence>
<evidence type="ECO:0007744" key="7">
    <source>
        <dbReference type="PDB" id="5KC6"/>
    </source>
</evidence>
<evidence type="ECO:0007744" key="8">
    <source>
        <dbReference type="PDB" id="5KC7"/>
    </source>
</evidence>
<evidence type="ECO:0007744" key="9">
    <source>
        <dbReference type="PDB" id="5KCA"/>
    </source>
</evidence>
<evidence type="ECO:0007829" key="10">
    <source>
        <dbReference type="PDB" id="5KC5"/>
    </source>
</evidence>
<keyword id="KW-0002">3D-structure</keyword>
<keyword id="KW-1003">Cell membrane</keyword>
<keyword id="KW-0903">Direct protein sequencing</keyword>
<keyword id="KW-1015">Disulfide bond</keyword>
<keyword id="KW-0325">Glycoprotein</keyword>
<keyword id="KW-0472">Membrane</keyword>
<keyword id="KW-0628">Postsynaptic cell membrane</keyword>
<keyword id="KW-1267">Proteomics identification</keyword>
<keyword id="KW-1185">Reference proteome</keyword>
<keyword id="KW-0964">Secreted</keyword>
<keyword id="KW-0730">Sialic acid</keyword>
<keyword id="KW-0732">Signal</keyword>
<keyword id="KW-0770">Synapse</keyword>
<gene>
    <name type="primary">CBLN1</name>
</gene>
<accession>P23435</accession>
<accession>B2RAN9</accession>
<accession>P02682</accession>
<accession>Q52M09</accession>
<dbReference type="EMBL" id="M58583">
    <property type="protein sequence ID" value="AAA35676.1"/>
    <property type="molecule type" value="mRNA"/>
</dbReference>
<dbReference type="EMBL" id="AK314276">
    <property type="protein sequence ID" value="BAG36936.1"/>
    <property type="molecule type" value="mRNA"/>
</dbReference>
<dbReference type="EMBL" id="CH471092">
    <property type="protein sequence ID" value="EAW82731.1"/>
    <property type="molecule type" value="Genomic_DNA"/>
</dbReference>
<dbReference type="EMBL" id="BC093692">
    <property type="protein sequence ID" value="AAH93692.1"/>
    <property type="molecule type" value="mRNA"/>
</dbReference>
<dbReference type="EMBL" id="BC093718">
    <property type="protein sequence ID" value="AAH93718.1"/>
    <property type="molecule type" value="mRNA"/>
</dbReference>
<dbReference type="CCDS" id="CCDS10736.1"/>
<dbReference type="PIR" id="A37873">
    <property type="entry name" value="A37873"/>
</dbReference>
<dbReference type="PIR" id="PL0124">
    <property type="entry name" value="PL0124"/>
</dbReference>
<dbReference type="RefSeq" id="NP_004343.1">
    <property type="nucleotide sequence ID" value="NM_004352.4"/>
</dbReference>
<dbReference type="PDB" id="5KC5">
    <property type="method" value="X-ray"/>
    <property type="resolution" value="2.35 A"/>
    <property type="chains" value="A=58-193"/>
</dbReference>
<dbReference type="PDB" id="5KC6">
    <property type="method" value="X-ray"/>
    <property type="resolution" value="2.80 A"/>
    <property type="chains" value="A/B/C=24-193"/>
</dbReference>
<dbReference type="PDB" id="5KC7">
    <property type="method" value="X-ray"/>
    <property type="resolution" value="7.04 A"/>
    <property type="chains" value="A/B/C/D=24-193"/>
</dbReference>
<dbReference type="PDB" id="5KCA">
    <property type="method" value="X-ray"/>
    <property type="resolution" value="3.10 A"/>
    <property type="chains" value="A=57-193"/>
</dbReference>
<dbReference type="PDBsum" id="5KC5"/>
<dbReference type="PDBsum" id="5KC6"/>
<dbReference type="PDBsum" id="5KC7"/>
<dbReference type="PDBsum" id="5KCA"/>
<dbReference type="SMR" id="P23435"/>
<dbReference type="BioGRID" id="107317">
    <property type="interactions" value="1"/>
</dbReference>
<dbReference type="FunCoup" id="P23435">
    <property type="interactions" value="51"/>
</dbReference>
<dbReference type="IntAct" id="P23435">
    <property type="interactions" value="1"/>
</dbReference>
<dbReference type="STRING" id="9606.ENSP00000219197"/>
<dbReference type="GlyConnect" id="2026">
    <property type="glycosylation" value="1 N-Linked glycan (1 site)"/>
</dbReference>
<dbReference type="GlyCosmos" id="P23435">
    <property type="glycosylation" value="3 sites, 3 glycans"/>
</dbReference>
<dbReference type="GlyGen" id="P23435">
    <property type="glycosylation" value="4 sites, 2 N-linked glycans (1 site), 1 O-linked glycan (1 site)"/>
</dbReference>
<dbReference type="iPTMnet" id="P23435"/>
<dbReference type="PhosphoSitePlus" id="P23435"/>
<dbReference type="BioMuta" id="CBLN1"/>
<dbReference type="DMDM" id="116114"/>
<dbReference type="MassIVE" id="P23435"/>
<dbReference type="PaxDb" id="9606-ENSP00000219197"/>
<dbReference type="PeptideAtlas" id="P23435"/>
<dbReference type="ProteomicsDB" id="54094"/>
<dbReference type="Antibodypedia" id="14491">
    <property type="antibodies" value="217 antibodies from 32 providers"/>
</dbReference>
<dbReference type="DNASU" id="869"/>
<dbReference type="Ensembl" id="ENST00000219197.11">
    <property type="protein sequence ID" value="ENSP00000219197.5"/>
    <property type="gene ID" value="ENSG00000102924.13"/>
</dbReference>
<dbReference type="GeneID" id="869"/>
<dbReference type="KEGG" id="hsa:869"/>
<dbReference type="MANE-Select" id="ENST00000219197.11">
    <property type="protein sequence ID" value="ENSP00000219197.5"/>
    <property type="RefSeq nucleotide sequence ID" value="NM_004352.4"/>
    <property type="RefSeq protein sequence ID" value="NP_004343.1"/>
</dbReference>
<dbReference type="UCSC" id="uc002efq.4">
    <property type="organism name" value="human"/>
</dbReference>
<dbReference type="AGR" id="HGNC:1543"/>
<dbReference type="CTD" id="869"/>
<dbReference type="DisGeNET" id="869"/>
<dbReference type="GeneCards" id="CBLN1"/>
<dbReference type="HGNC" id="HGNC:1543">
    <property type="gene designation" value="CBLN1"/>
</dbReference>
<dbReference type="HPA" id="ENSG00000102924">
    <property type="expression patterns" value="Tissue enriched (brain)"/>
</dbReference>
<dbReference type="MIM" id="600432">
    <property type="type" value="gene"/>
</dbReference>
<dbReference type="neXtProt" id="NX_P23435"/>
<dbReference type="OpenTargets" id="ENSG00000102924"/>
<dbReference type="PharmGKB" id="PA26118"/>
<dbReference type="VEuPathDB" id="HostDB:ENSG00000102924"/>
<dbReference type="eggNOG" id="ENOG502QVN9">
    <property type="taxonomic scope" value="Eukaryota"/>
</dbReference>
<dbReference type="GeneTree" id="ENSGT00940000159811"/>
<dbReference type="HOGENOM" id="CLU_001074_8_2_1"/>
<dbReference type="InParanoid" id="P23435"/>
<dbReference type="OMA" id="AWLACGQ"/>
<dbReference type="OrthoDB" id="10070467at2759"/>
<dbReference type="PAN-GO" id="P23435">
    <property type="GO annotations" value="4 GO annotations based on evolutionary models"/>
</dbReference>
<dbReference type="PhylomeDB" id="P23435"/>
<dbReference type="TreeFam" id="TF329591"/>
<dbReference type="PathwayCommons" id="P23435"/>
<dbReference type="BioGRID-ORCS" id="869">
    <property type="hits" value="72 hits in 1138 CRISPR screens"/>
</dbReference>
<dbReference type="GenomeRNAi" id="869"/>
<dbReference type="Pharos" id="P23435">
    <property type="development level" value="Tbio"/>
</dbReference>
<dbReference type="PRO" id="PR:P23435"/>
<dbReference type="Proteomes" id="UP000005640">
    <property type="component" value="Chromosome 16"/>
</dbReference>
<dbReference type="RNAct" id="P23435">
    <property type="molecule type" value="protein"/>
</dbReference>
<dbReference type="Bgee" id="ENSG00000102924">
    <property type="expression patterns" value="Expressed in cerebellar cortex and 104 other cell types or tissues"/>
</dbReference>
<dbReference type="ExpressionAtlas" id="P23435">
    <property type="expression patterns" value="baseline and differential"/>
</dbReference>
<dbReference type="GO" id="GO:0062023">
    <property type="term" value="C:collagen-containing extracellular matrix"/>
    <property type="evidence" value="ECO:0007005"/>
    <property type="project" value="BHF-UCL"/>
</dbReference>
<dbReference type="GO" id="GO:0005576">
    <property type="term" value="C:extracellular region"/>
    <property type="evidence" value="ECO:0000250"/>
    <property type="project" value="UniProtKB"/>
</dbReference>
<dbReference type="GO" id="GO:0098978">
    <property type="term" value="C:glutamatergic synapse"/>
    <property type="evidence" value="ECO:0000318"/>
    <property type="project" value="GO_Central"/>
</dbReference>
<dbReference type="GO" id="GO:0098688">
    <property type="term" value="C:parallel fiber to Purkinje cell synapse"/>
    <property type="evidence" value="ECO:0007669"/>
    <property type="project" value="Ensembl"/>
</dbReference>
<dbReference type="GO" id="GO:0045211">
    <property type="term" value="C:postsynaptic membrane"/>
    <property type="evidence" value="ECO:0000250"/>
    <property type="project" value="UniProtKB"/>
</dbReference>
<dbReference type="GO" id="GO:0043083">
    <property type="term" value="C:synaptic cleft"/>
    <property type="evidence" value="ECO:0000318"/>
    <property type="project" value="GO_Central"/>
</dbReference>
<dbReference type="GO" id="GO:0098820">
    <property type="term" value="C:trans-synaptic protein complex"/>
    <property type="evidence" value="ECO:0000314"/>
    <property type="project" value="UniProt"/>
</dbReference>
<dbReference type="GO" id="GO:0042802">
    <property type="term" value="F:identical protein binding"/>
    <property type="evidence" value="ECO:0007669"/>
    <property type="project" value="Ensembl"/>
</dbReference>
<dbReference type="GO" id="GO:0021707">
    <property type="term" value="P:cerebellar granule cell differentiation"/>
    <property type="evidence" value="ECO:0000250"/>
    <property type="project" value="BHF-UCL"/>
</dbReference>
<dbReference type="GO" id="GO:0007268">
    <property type="term" value="P:chemical synaptic transmission"/>
    <property type="evidence" value="ECO:0000304"/>
    <property type="project" value="ProtInc"/>
</dbReference>
<dbReference type="GO" id="GO:0051649">
    <property type="term" value="P:establishment of localization in cell"/>
    <property type="evidence" value="ECO:0007669"/>
    <property type="project" value="Ensembl"/>
</dbReference>
<dbReference type="GO" id="GO:0007157">
    <property type="term" value="P:heterophilic cell-cell adhesion via plasma membrane cell adhesion molecules"/>
    <property type="evidence" value="ECO:0000250"/>
    <property type="project" value="BHF-UCL"/>
</dbReference>
<dbReference type="GO" id="GO:0099558">
    <property type="term" value="P:maintenance of synapse structure"/>
    <property type="evidence" value="ECO:0000250"/>
    <property type="project" value="UniProtKB"/>
</dbReference>
<dbReference type="GO" id="GO:0090394">
    <property type="term" value="P:negative regulation of excitatory postsynaptic potential"/>
    <property type="evidence" value="ECO:0000315"/>
    <property type="project" value="UniProtKB"/>
</dbReference>
<dbReference type="GO" id="GO:1905703">
    <property type="term" value="P:negative regulation of inhibitory synapse assembly"/>
    <property type="evidence" value="ECO:0000250"/>
    <property type="project" value="UniProtKB"/>
</dbReference>
<dbReference type="GO" id="GO:0007399">
    <property type="term" value="P:nervous system development"/>
    <property type="evidence" value="ECO:0000304"/>
    <property type="project" value="ProtInc"/>
</dbReference>
<dbReference type="GO" id="GO:1900454">
    <property type="term" value="P:positive regulation of long-term synaptic depression"/>
    <property type="evidence" value="ECO:0000315"/>
    <property type="project" value="UniProtKB"/>
</dbReference>
<dbReference type="GO" id="GO:0051965">
    <property type="term" value="P:positive regulation of synapse assembly"/>
    <property type="evidence" value="ECO:0007669"/>
    <property type="project" value="Ensembl"/>
</dbReference>
<dbReference type="GO" id="GO:0009306">
    <property type="term" value="P:protein secretion"/>
    <property type="evidence" value="ECO:0007669"/>
    <property type="project" value="Ensembl"/>
</dbReference>
<dbReference type="GO" id="GO:0099151">
    <property type="term" value="P:regulation of postsynaptic density assembly"/>
    <property type="evidence" value="ECO:0007669"/>
    <property type="project" value="Ensembl"/>
</dbReference>
<dbReference type="GO" id="GO:1905606">
    <property type="term" value="P:regulation of presynapse assembly"/>
    <property type="evidence" value="ECO:0007669"/>
    <property type="project" value="Ensembl"/>
</dbReference>
<dbReference type="GO" id="GO:0007416">
    <property type="term" value="P:synapse assembly"/>
    <property type="evidence" value="ECO:0007669"/>
    <property type="project" value="Ensembl"/>
</dbReference>
<dbReference type="GO" id="GO:0050808">
    <property type="term" value="P:synapse organization"/>
    <property type="evidence" value="ECO:0000250"/>
    <property type="project" value="UniProtKB"/>
</dbReference>
<dbReference type="GO" id="GO:0099550">
    <property type="term" value="P:trans-synaptic signaling, modulating synaptic transmission"/>
    <property type="evidence" value="ECO:0007669"/>
    <property type="project" value="Ensembl"/>
</dbReference>
<dbReference type="FunFam" id="2.60.120.40:FF:000002">
    <property type="entry name" value="Cerebellin 4"/>
    <property type="match status" value="1"/>
</dbReference>
<dbReference type="Gene3D" id="2.60.120.40">
    <property type="match status" value="1"/>
</dbReference>
<dbReference type="InterPro" id="IPR001073">
    <property type="entry name" value="C1q_dom"/>
</dbReference>
<dbReference type="InterPro" id="IPR050822">
    <property type="entry name" value="Cerebellin_Synaptic_Org"/>
</dbReference>
<dbReference type="InterPro" id="IPR008983">
    <property type="entry name" value="Tumour_necrosis_fac-like_dom"/>
</dbReference>
<dbReference type="PANTHER" id="PTHR22923:SF5">
    <property type="entry name" value="CEREBELLIN-1"/>
    <property type="match status" value="1"/>
</dbReference>
<dbReference type="PANTHER" id="PTHR22923">
    <property type="entry name" value="CEREBELLIN-RELATED"/>
    <property type="match status" value="1"/>
</dbReference>
<dbReference type="Pfam" id="PF00386">
    <property type="entry name" value="C1q"/>
    <property type="match status" value="1"/>
</dbReference>
<dbReference type="PRINTS" id="PR00007">
    <property type="entry name" value="COMPLEMNTC1Q"/>
</dbReference>
<dbReference type="SMART" id="SM00110">
    <property type="entry name" value="C1Q"/>
    <property type="match status" value="1"/>
</dbReference>
<dbReference type="SUPFAM" id="SSF49842">
    <property type="entry name" value="TNF-like"/>
    <property type="match status" value="1"/>
</dbReference>
<dbReference type="PROSITE" id="PS50871">
    <property type="entry name" value="C1Q"/>
    <property type="match status" value="1"/>
</dbReference>
<organism>
    <name type="scientific">Homo sapiens</name>
    <name type="common">Human</name>
    <dbReference type="NCBI Taxonomy" id="9606"/>
    <lineage>
        <taxon>Eukaryota</taxon>
        <taxon>Metazoa</taxon>
        <taxon>Chordata</taxon>
        <taxon>Craniata</taxon>
        <taxon>Vertebrata</taxon>
        <taxon>Euteleostomi</taxon>
        <taxon>Mammalia</taxon>
        <taxon>Eutheria</taxon>
        <taxon>Euarchontoglires</taxon>
        <taxon>Primates</taxon>
        <taxon>Haplorrhini</taxon>
        <taxon>Catarrhini</taxon>
        <taxon>Hominidae</taxon>
        <taxon>Homo</taxon>
    </lineage>
</organism>
<name>CBLN1_HUMAN</name>
<feature type="signal peptide" evidence="3">
    <location>
        <begin position="1"/>
        <end position="21"/>
    </location>
</feature>
<feature type="chain" id="PRO_0000274209" description="Cerebellin-1">
    <location>
        <begin position="22"/>
        <end position="193"/>
    </location>
</feature>
<feature type="peptide" id="PRO_0000003546" description="Cerebellin">
    <location>
        <begin position="57"/>
        <end position="72"/>
    </location>
</feature>
<feature type="peptide" id="PRO_0000274210" description="[des-Ser1]-cerebellin">
    <location>
        <begin position="58"/>
        <end position="72"/>
    </location>
</feature>
<feature type="domain" description="C1q" evidence="4">
    <location>
        <begin position="57"/>
        <end position="193"/>
    </location>
</feature>
<feature type="region of interest" description="Essential for interaction with NRXN1 and linker of two C1q trimers into disulfide-linked hexamers" evidence="5">
    <location>
        <begin position="34"/>
        <end position="38"/>
    </location>
</feature>
<feature type="region of interest" description="Necessary for interaction with CBLN3, and homotrimerization" evidence="2">
    <location>
        <begin position="62"/>
        <end position="193"/>
    </location>
</feature>
<feature type="region of interest" description="Essential for interaction with GRID2" evidence="5">
    <location>
        <begin position="122"/>
        <end position="147"/>
    </location>
</feature>
<feature type="glycosylation site" description="N-linked (GlcNAc...) asparagine" evidence="3">
    <location>
        <position position="23"/>
    </location>
</feature>
<feature type="glycosylation site" description="N-linked (GlcNAc...) asparagine" evidence="5 6 7">
    <location>
        <position position="79"/>
    </location>
</feature>
<feature type="disulfide bond" description="Interchain" evidence="2">
    <location>
        <position position="34"/>
    </location>
</feature>
<feature type="disulfide bond" description="Interchain" evidence="2">
    <location>
        <position position="38"/>
    </location>
</feature>
<feature type="mutagenesis site" description="Abolishes hexamer formation; when associated with S-38. Abolishes interaction with NRXN1; when associated with S-38. Abolishes GRID2 interaction; when associated with S-38." evidence="5">
    <original>C</original>
    <variation>S</variation>
    <location>
        <position position="34"/>
    </location>
</feature>
<feature type="mutagenesis site" description="Abolishes hexamer formation; when associated with S-34. Abolishes interaction with NRXN1 isoform 3B; when associated with S-34. Abolishes GRID2 interaction.; when associated with S-34." evidence="5">
    <original>C</original>
    <variation>S</variation>
    <location>
        <position position="38"/>
    </location>
</feature>
<feature type="mutagenesis site" description="Abolishes GRID2 interaction.; when associated with A-124 and A-147." evidence="5">
    <original>Y</original>
    <variation>A</variation>
    <location>
        <position position="122"/>
    </location>
</feature>
<feature type="mutagenesis site" description="Abolishes GRID2 interaction.; when associated with A-122 and A-147." evidence="5">
    <original>R</original>
    <variation>A</variation>
    <location>
        <position position="124"/>
    </location>
</feature>
<feature type="mutagenesis site" description="Abolishes GRID2 interaction.; when associated with A-122 and A-124." evidence="5">
    <original>D</original>
    <variation>A</variation>
    <location>
        <position position="147"/>
    </location>
</feature>
<feature type="strand" evidence="10">
    <location>
        <begin position="63"/>
        <end position="67"/>
    </location>
</feature>
<feature type="helix" evidence="10">
    <location>
        <begin position="78"/>
        <end position="81"/>
    </location>
</feature>
<feature type="strand" evidence="10">
    <location>
        <begin position="87"/>
        <end position="93"/>
    </location>
</feature>
<feature type="turn" evidence="10">
    <location>
        <begin position="99"/>
        <end position="102"/>
    </location>
</feature>
<feature type="strand" evidence="10">
    <location>
        <begin position="103"/>
        <end position="105"/>
    </location>
</feature>
<feature type="strand" evidence="10">
    <location>
        <begin position="107"/>
        <end position="120"/>
    </location>
</feature>
<feature type="strand" evidence="10">
    <location>
        <begin position="127"/>
        <end position="133"/>
    </location>
</feature>
<feature type="strand" evidence="10">
    <location>
        <begin position="136"/>
        <end position="143"/>
    </location>
</feature>
<feature type="strand" evidence="10">
    <location>
        <begin position="147"/>
        <end position="149"/>
    </location>
</feature>
<feature type="strand" evidence="10">
    <location>
        <begin position="151"/>
        <end position="161"/>
    </location>
</feature>
<feature type="strand" evidence="10">
    <location>
        <begin position="166"/>
        <end position="174"/>
    </location>
</feature>
<feature type="strand" evidence="10">
    <location>
        <begin position="184"/>
        <end position="192"/>
    </location>
</feature>
<reference key="1">
    <citation type="journal article" date="1991" name="Proc. Natl. Acad. Sci. U.S.A.">
        <title>Precerebellin is a cerebellum-specific protein with similarity to the globular domain of complement C1q B chain.</title>
        <authorList>
            <person name="Urade Y."/>
            <person name="Oberdick J."/>
            <person name="Molinar-Rode R."/>
            <person name="Morgan J.I."/>
        </authorList>
    </citation>
    <scope>NUCLEOTIDE SEQUENCE [MRNA]</scope>
</reference>
<reference key="2">
    <citation type="journal article" date="2004" name="Nat. Genet.">
        <title>Complete sequencing and characterization of 21,243 full-length human cDNAs.</title>
        <authorList>
            <person name="Ota T."/>
            <person name="Suzuki Y."/>
            <person name="Nishikawa T."/>
            <person name="Otsuki T."/>
            <person name="Sugiyama T."/>
            <person name="Irie R."/>
            <person name="Wakamatsu A."/>
            <person name="Hayashi K."/>
            <person name="Sato H."/>
            <person name="Nagai K."/>
            <person name="Kimura K."/>
            <person name="Makita H."/>
            <person name="Sekine M."/>
            <person name="Obayashi M."/>
            <person name="Nishi T."/>
            <person name="Shibahara T."/>
            <person name="Tanaka T."/>
            <person name="Ishii S."/>
            <person name="Yamamoto J."/>
            <person name="Saito K."/>
            <person name="Kawai Y."/>
            <person name="Isono Y."/>
            <person name="Nakamura Y."/>
            <person name="Nagahari K."/>
            <person name="Murakami K."/>
            <person name="Yasuda T."/>
            <person name="Iwayanagi T."/>
            <person name="Wagatsuma M."/>
            <person name="Shiratori A."/>
            <person name="Sudo H."/>
            <person name="Hosoiri T."/>
            <person name="Kaku Y."/>
            <person name="Kodaira H."/>
            <person name="Kondo H."/>
            <person name="Sugawara M."/>
            <person name="Takahashi M."/>
            <person name="Kanda K."/>
            <person name="Yokoi T."/>
            <person name="Furuya T."/>
            <person name="Kikkawa E."/>
            <person name="Omura Y."/>
            <person name="Abe K."/>
            <person name="Kamihara K."/>
            <person name="Katsuta N."/>
            <person name="Sato K."/>
            <person name="Tanikawa M."/>
            <person name="Yamazaki M."/>
            <person name="Ninomiya K."/>
            <person name="Ishibashi T."/>
            <person name="Yamashita H."/>
            <person name="Murakawa K."/>
            <person name="Fujimori K."/>
            <person name="Tanai H."/>
            <person name="Kimata M."/>
            <person name="Watanabe M."/>
            <person name="Hiraoka S."/>
            <person name="Chiba Y."/>
            <person name="Ishida S."/>
            <person name="Ono Y."/>
            <person name="Takiguchi S."/>
            <person name="Watanabe S."/>
            <person name="Yosida M."/>
            <person name="Hotuta T."/>
            <person name="Kusano J."/>
            <person name="Kanehori K."/>
            <person name="Takahashi-Fujii A."/>
            <person name="Hara H."/>
            <person name="Tanase T.-O."/>
            <person name="Nomura Y."/>
            <person name="Togiya S."/>
            <person name="Komai F."/>
            <person name="Hara R."/>
            <person name="Takeuchi K."/>
            <person name="Arita M."/>
            <person name="Imose N."/>
            <person name="Musashino K."/>
            <person name="Yuuki H."/>
            <person name="Oshima A."/>
            <person name="Sasaki N."/>
            <person name="Aotsuka S."/>
            <person name="Yoshikawa Y."/>
            <person name="Matsunawa H."/>
            <person name="Ichihara T."/>
            <person name="Shiohata N."/>
            <person name="Sano S."/>
            <person name="Moriya S."/>
            <person name="Momiyama H."/>
            <person name="Satoh N."/>
            <person name="Takami S."/>
            <person name="Terashima Y."/>
            <person name="Suzuki O."/>
            <person name="Nakagawa S."/>
            <person name="Senoh A."/>
            <person name="Mizoguchi H."/>
            <person name="Goto Y."/>
            <person name="Shimizu F."/>
            <person name="Wakebe H."/>
            <person name="Hishigaki H."/>
            <person name="Watanabe T."/>
            <person name="Sugiyama A."/>
            <person name="Takemoto M."/>
            <person name="Kawakami B."/>
            <person name="Yamazaki M."/>
            <person name="Watanabe K."/>
            <person name="Kumagai A."/>
            <person name="Itakura S."/>
            <person name="Fukuzumi Y."/>
            <person name="Fujimori Y."/>
            <person name="Komiyama M."/>
            <person name="Tashiro H."/>
            <person name="Tanigami A."/>
            <person name="Fujiwara T."/>
            <person name="Ono T."/>
            <person name="Yamada K."/>
            <person name="Fujii Y."/>
            <person name="Ozaki K."/>
            <person name="Hirao M."/>
            <person name="Ohmori Y."/>
            <person name="Kawabata A."/>
            <person name="Hikiji T."/>
            <person name="Kobatake N."/>
            <person name="Inagaki H."/>
            <person name="Ikema Y."/>
            <person name="Okamoto S."/>
            <person name="Okitani R."/>
            <person name="Kawakami T."/>
            <person name="Noguchi S."/>
            <person name="Itoh T."/>
            <person name="Shigeta K."/>
            <person name="Senba T."/>
            <person name="Matsumura K."/>
            <person name="Nakajima Y."/>
            <person name="Mizuno T."/>
            <person name="Morinaga M."/>
            <person name="Sasaki M."/>
            <person name="Togashi T."/>
            <person name="Oyama M."/>
            <person name="Hata H."/>
            <person name="Watanabe M."/>
            <person name="Komatsu T."/>
            <person name="Mizushima-Sugano J."/>
            <person name="Satoh T."/>
            <person name="Shirai Y."/>
            <person name="Takahashi Y."/>
            <person name="Nakagawa K."/>
            <person name="Okumura K."/>
            <person name="Nagase T."/>
            <person name="Nomura N."/>
            <person name="Kikuchi H."/>
            <person name="Masuho Y."/>
            <person name="Yamashita R."/>
            <person name="Nakai K."/>
            <person name="Yada T."/>
            <person name="Nakamura Y."/>
            <person name="Ohara O."/>
            <person name="Isogai T."/>
            <person name="Sugano S."/>
        </authorList>
    </citation>
    <scope>NUCLEOTIDE SEQUENCE [LARGE SCALE MRNA]</scope>
</reference>
<reference key="3">
    <citation type="submission" date="2005-07" db="EMBL/GenBank/DDBJ databases">
        <authorList>
            <person name="Mural R.J."/>
            <person name="Istrail S."/>
            <person name="Sutton G.G."/>
            <person name="Florea L."/>
            <person name="Halpern A.L."/>
            <person name="Mobarry C.M."/>
            <person name="Lippert R."/>
            <person name="Walenz B."/>
            <person name="Shatkay H."/>
            <person name="Dew I."/>
            <person name="Miller J.R."/>
            <person name="Flanigan M.J."/>
            <person name="Edwards N.J."/>
            <person name="Bolanos R."/>
            <person name="Fasulo D."/>
            <person name="Halldorsson B.V."/>
            <person name="Hannenhalli S."/>
            <person name="Turner R."/>
            <person name="Yooseph S."/>
            <person name="Lu F."/>
            <person name="Nusskern D.R."/>
            <person name="Shue B.C."/>
            <person name="Zheng X.H."/>
            <person name="Zhong F."/>
            <person name="Delcher A.L."/>
            <person name="Huson D.H."/>
            <person name="Kravitz S.A."/>
            <person name="Mouchard L."/>
            <person name="Reinert K."/>
            <person name="Remington K.A."/>
            <person name="Clark A.G."/>
            <person name="Waterman M.S."/>
            <person name="Eichler E.E."/>
            <person name="Adams M.D."/>
            <person name="Hunkapiller M.W."/>
            <person name="Myers E.W."/>
            <person name="Venter J.C."/>
        </authorList>
    </citation>
    <scope>NUCLEOTIDE SEQUENCE [LARGE SCALE GENOMIC DNA]</scope>
</reference>
<reference key="4">
    <citation type="journal article" date="2004" name="Genome Res.">
        <title>The status, quality, and expansion of the NIH full-length cDNA project: the Mammalian Gene Collection (MGC).</title>
        <authorList>
            <consortium name="The MGC Project Team"/>
        </authorList>
    </citation>
    <scope>NUCLEOTIDE SEQUENCE [LARGE SCALE MRNA]</scope>
    <source>
        <tissue>Brain</tissue>
    </source>
</reference>
<reference key="5">
    <citation type="journal article" date="1989" name="J. Neurochem.">
        <title>Purification and characterisation of cerebellins from human and porcine cerebellum.</title>
        <authorList>
            <person name="Yiangou Y."/>
            <person name="Burnet P."/>
            <person name="Nikou G."/>
            <person name="Chrysanthou B.J."/>
            <person name="Bloom S.R."/>
        </authorList>
    </citation>
    <scope>PROTEIN SEQUENCE OF 57-72 (CEREBELLIN AND [DES-SER1]-CEREBELLIN)</scope>
    <source>
        <tissue>Cerebellum</tissue>
    </source>
</reference>
<reference evidence="6 7 8 9" key="6">
    <citation type="journal article" date="2016" name="Science">
        <title>Structural basis for integration of GluD receptors within synaptic organizer complexes.</title>
        <authorList>
            <person name="Elegheert J."/>
            <person name="Kakegawa W."/>
            <person name="Clay J.E."/>
            <person name="Shanks N.F."/>
            <person name="Behiels E."/>
            <person name="Matsuda K."/>
            <person name="Kohda K."/>
            <person name="Miura E."/>
            <person name="Rossmann M."/>
            <person name="Mitakidis N."/>
            <person name="Motohashi J."/>
            <person name="Chang V.T."/>
            <person name="Siebold C."/>
            <person name="Greger I.H."/>
            <person name="Nakagawa T."/>
            <person name="Yuzaki M."/>
            <person name="Aricescu A.R."/>
        </authorList>
    </citation>
    <scope>X-RAY CRYSTALLOGRAPHY (2.35 ANGSTROMS) OF 58-193</scope>
    <scope>GLYCOSYLATION AT ASN-79</scope>
    <scope>MUTAGENESIS OF CYS-34; CYS-38; TYR-122; ARG-124 AND ASP-147</scope>
    <scope>SUBUNIT</scope>
    <scope>INTERACTION WITH NRXN1 AND GRID2</scope>
    <scope>FUNCTION</scope>
    <scope>REGION</scope>
</reference>
<comment type="function">
    <text evidence="2 5">Required for synapse integrity and synaptic plasticity. During cerebellar synapse formation, essential for the matching and maintenance of pre- and post-synaptic elements at parallel fiber-Purkinje cell synapses, the establishment of the proper pattern of climbing fiber-Purkinje cell innervation, and induction of long-term depression at parallel fiber-Purkinje cell synapses. Plays a role as a synaptic organizer that acts bidirectionally on both pre- and post-synaptic components. On the one hand induces accumulation of synaptic vesicles in the pre-synaptic part by binding with NRXN1 and in other hand induces clustering of GRID2 and its associated proteins at the post-synaptic site through association of GRID2. NRXN1-CBLN1-GRID2 complex directly induces parallel fiber protrusions that encapsulate spines of Purkinje cells leading to accumulation of GRID2 and synaptic vesicles. Required for CBLN3 export from the endoplasmic reticulum and secretion (By similarity). NRXN1-CBLN1-GRID2 complex mediates the D-Serine-dependent long term depression signals and AMPA receptor endocytosis (PubMed:27418511). Essential for long-term maintenance but not establishment of excitatory synapses (By similarity). Inhibits the formation and function of inhibitory GABAergic synapses in cerebellar Purkinje cells (By similarity).</text>
</comment>
<comment type="function">
    <text evidence="1">The cerebellin peptide exerts neuromodulatory functions. Directly stimulates norepinephrine release via the adenylate cyclase/PKA-dependent signaling pathway; and indirectly enhances adrenocortical secretion in vivo, through a paracrine mechanism involving medullary catecholamine release (By similarity).</text>
</comment>
<comment type="subunit">
    <text evidence="2 5">Homohexamer; disulfide-linked homotrimers. The trimers associate via N-terminal cysteine residues to form disulfide-linked hexamers (PubMed:27418511). May form oligomers with CBLN2, CBLN3 AND CBLN4 prior to secretion. Once secreted, does not interact with other CBLN family members. Interacts with GRID1 (By similarity). Interacts with NRXN1 and NRXN2 long (alpha) and short (beta) isoforms produced by alternative promoter usage. Competes with NLGN1 for NRXN1-binding. Weakly interacts with NRXN3 short isoform and not at all with NRXN3 long isoform (PubMed:27418511). Interacts (via C1q domain) with GRID2; GRID2-binding is calcium-independent; CBLN1 hexamers anchor GRID2 N-terminal domain dimers to monomeric NRXN1 isoform beta; promotes synaptogenesis and mediates the D-Serine-dependent long term depression signals and AMPA receptor endocytosis (PubMed:27418511). Interacts with OTOL1 (By similarity).</text>
</comment>
<comment type="subcellular location">
    <subcellularLocation>
        <location evidence="2">Secreted</location>
    </subcellularLocation>
    <subcellularLocation>
        <location evidence="2">Postsynaptic cell membrane</location>
    </subcellularLocation>
</comment>
<comment type="tissue specificity">
    <text>In the Purkinje cells postsynaptic structures. In the cerebellum, cerebellin is much less abundant than [des-Ser1]-cerebellin.</text>
</comment>
<comment type="developmental stage">
    <text>Low at birth, the cerebellin concentration increases between day 5 and 15, and reaches peak values between day 21 and 56.</text>
</comment>
<comment type="PTM">
    <text evidence="2">The proteolytic processing to yield cerebellin seems to occur either prior to the secretion by presynaptic neurons and subsequent oligomerization or in some other location after release of the mature protein.</text>
</comment>
<comment type="PTM">
    <text evidence="2">Sialoglycoprotein.</text>
</comment>